<keyword id="KW-0131">Cell cycle</keyword>
<keyword id="KW-0132">Cell division</keyword>
<keyword id="KW-0143">Chaperone</keyword>
<keyword id="KW-0963">Cytoplasm</keyword>
<keyword id="KW-0413">Isomerase</keyword>
<keyword id="KW-1185">Reference proteome</keyword>
<keyword id="KW-0697">Rotamase</keyword>
<reference key="1">
    <citation type="submission" date="2007-11" db="EMBL/GenBank/DDBJ databases">
        <title>Complete sequence of Delftia acidovorans DSM 14801 / SPH-1.</title>
        <authorList>
            <person name="Copeland A."/>
            <person name="Lucas S."/>
            <person name="Lapidus A."/>
            <person name="Barry K."/>
            <person name="Glavina del Rio T."/>
            <person name="Dalin E."/>
            <person name="Tice H."/>
            <person name="Pitluck S."/>
            <person name="Lowry S."/>
            <person name="Clum A."/>
            <person name="Schmutz J."/>
            <person name="Larimer F."/>
            <person name="Land M."/>
            <person name="Hauser L."/>
            <person name="Kyrpides N."/>
            <person name="Kim E."/>
            <person name="Schleheck D."/>
            <person name="Richardson P."/>
        </authorList>
    </citation>
    <scope>NUCLEOTIDE SEQUENCE [LARGE SCALE GENOMIC DNA]</scope>
    <source>
        <strain>DSM 14801 / SPH-1</strain>
    </source>
</reference>
<gene>
    <name evidence="1" type="primary">tig</name>
    <name type="ordered locus">Daci_2644</name>
</gene>
<name>TIG_DELAS</name>
<proteinExistence type="inferred from homology"/>
<evidence type="ECO:0000255" key="1">
    <source>
        <dbReference type="HAMAP-Rule" id="MF_00303"/>
    </source>
</evidence>
<feature type="chain" id="PRO_1000115527" description="Trigger factor">
    <location>
        <begin position="1"/>
        <end position="436"/>
    </location>
</feature>
<feature type="domain" description="PPIase FKBP-type" evidence="1">
    <location>
        <begin position="163"/>
        <end position="248"/>
    </location>
</feature>
<comment type="function">
    <text evidence="1">Involved in protein export. Acts as a chaperone by maintaining the newly synthesized protein in an open conformation. Functions as a peptidyl-prolyl cis-trans isomerase.</text>
</comment>
<comment type="catalytic activity">
    <reaction evidence="1">
        <text>[protein]-peptidylproline (omega=180) = [protein]-peptidylproline (omega=0)</text>
        <dbReference type="Rhea" id="RHEA:16237"/>
        <dbReference type="Rhea" id="RHEA-COMP:10747"/>
        <dbReference type="Rhea" id="RHEA-COMP:10748"/>
        <dbReference type="ChEBI" id="CHEBI:83833"/>
        <dbReference type="ChEBI" id="CHEBI:83834"/>
        <dbReference type="EC" id="5.2.1.8"/>
    </reaction>
</comment>
<comment type="subcellular location">
    <subcellularLocation>
        <location>Cytoplasm</location>
    </subcellularLocation>
    <text evidence="1">About half TF is bound to the ribosome near the polypeptide exit tunnel while the other half is free in the cytoplasm.</text>
</comment>
<comment type="domain">
    <text evidence="1">Consists of 3 domains; the N-terminus binds the ribosome, the middle domain has PPIase activity, while the C-terminus has intrinsic chaperone activity on its own.</text>
</comment>
<comment type="similarity">
    <text evidence="1">Belongs to the FKBP-type PPIase family. Tig subfamily.</text>
</comment>
<sequence>MAVTVETLEKLERKITLSLPLNSIQSEVENRLKQVARTVKMDGFRPGKVPMSVVAQRYGYSVQYEVLNDKVGEAFAQAVNEAKLRVAGQPRISEKEGAPEGEAQFEAIFEVMPEVKIGDLTSAEVEKLTAEVDDAAIDKTVDILRKQRRTFAQRAQADVAVDGDRVTVDFEGKIDGETFSGGKAEDFQFLVGEGQMLKEFEDAVRGMKAGESKTFPLAFPADYHGKDVAGKTADFLVTVKKIEAANLPEVDEAFAKALGVAEGTVEGLRADIKKNLEREVKFRVQGRNKQAVMDALVSKAELELPKASVQAEVARLLEGARAELQQRGIKDAEKAEIPEDVFLPQAERRVRLGLVVAELVRANELHATPDQIKAHVEELAASYEKPEDVARWYFGDRQRLAEVEAVVIENNVTEFVLGKAKVSDKAVSFDELMGQA</sequence>
<dbReference type="EC" id="5.2.1.8" evidence="1"/>
<dbReference type="EMBL" id="CP000884">
    <property type="protein sequence ID" value="ABX35282.1"/>
    <property type="molecule type" value="Genomic_DNA"/>
</dbReference>
<dbReference type="RefSeq" id="WP_012204528.1">
    <property type="nucleotide sequence ID" value="NC_010002.1"/>
</dbReference>
<dbReference type="SMR" id="A9C1U7"/>
<dbReference type="STRING" id="398578.Daci_2644"/>
<dbReference type="GeneID" id="24116019"/>
<dbReference type="KEGG" id="dac:Daci_2644"/>
<dbReference type="eggNOG" id="COG0544">
    <property type="taxonomic scope" value="Bacteria"/>
</dbReference>
<dbReference type="HOGENOM" id="CLU_033058_2_0_4"/>
<dbReference type="Proteomes" id="UP000000784">
    <property type="component" value="Chromosome"/>
</dbReference>
<dbReference type="GO" id="GO:0005737">
    <property type="term" value="C:cytoplasm"/>
    <property type="evidence" value="ECO:0007669"/>
    <property type="project" value="UniProtKB-SubCell"/>
</dbReference>
<dbReference type="GO" id="GO:0003755">
    <property type="term" value="F:peptidyl-prolyl cis-trans isomerase activity"/>
    <property type="evidence" value="ECO:0007669"/>
    <property type="project" value="UniProtKB-UniRule"/>
</dbReference>
<dbReference type="GO" id="GO:0044183">
    <property type="term" value="F:protein folding chaperone"/>
    <property type="evidence" value="ECO:0007669"/>
    <property type="project" value="TreeGrafter"/>
</dbReference>
<dbReference type="GO" id="GO:0043022">
    <property type="term" value="F:ribosome binding"/>
    <property type="evidence" value="ECO:0007669"/>
    <property type="project" value="TreeGrafter"/>
</dbReference>
<dbReference type="GO" id="GO:0051083">
    <property type="term" value="P:'de novo' cotranslational protein folding"/>
    <property type="evidence" value="ECO:0007669"/>
    <property type="project" value="TreeGrafter"/>
</dbReference>
<dbReference type="GO" id="GO:0051301">
    <property type="term" value="P:cell division"/>
    <property type="evidence" value="ECO:0007669"/>
    <property type="project" value="UniProtKB-KW"/>
</dbReference>
<dbReference type="GO" id="GO:0061077">
    <property type="term" value="P:chaperone-mediated protein folding"/>
    <property type="evidence" value="ECO:0007669"/>
    <property type="project" value="TreeGrafter"/>
</dbReference>
<dbReference type="GO" id="GO:0015031">
    <property type="term" value="P:protein transport"/>
    <property type="evidence" value="ECO:0007669"/>
    <property type="project" value="UniProtKB-UniRule"/>
</dbReference>
<dbReference type="GO" id="GO:0043335">
    <property type="term" value="P:protein unfolding"/>
    <property type="evidence" value="ECO:0007669"/>
    <property type="project" value="TreeGrafter"/>
</dbReference>
<dbReference type="FunFam" id="3.10.50.40:FF:000001">
    <property type="entry name" value="Trigger factor"/>
    <property type="match status" value="1"/>
</dbReference>
<dbReference type="Gene3D" id="3.10.50.40">
    <property type="match status" value="1"/>
</dbReference>
<dbReference type="Gene3D" id="3.30.70.1050">
    <property type="entry name" value="Trigger factor ribosome-binding domain"/>
    <property type="match status" value="1"/>
</dbReference>
<dbReference type="Gene3D" id="1.10.3120.10">
    <property type="entry name" value="Trigger factor, C-terminal domain"/>
    <property type="match status" value="1"/>
</dbReference>
<dbReference type="HAMAP" id="MF_00303">
    <property type="entry name" value="Trigger_factor_Tig"/>
    <property type="match status" value="1"/>
</dbReference>
<dbReference type="InterPro" id="IPR046357">
    <property type="entry name" value="PPIase_dom_sf"/>
</dbReference>
<dbReference type="InterPro" id="IPR001179">
    <property type="entry name" value="PPIase_FKBP_dom"/>
</dbReference>
<dbReference type="InterPro" id="IPR005215">
    <property type="entry name" value="Trig_fac"/>
</dbReference>
<dbReference type="InterPro" id="IPR008880">
    <property type="entry name" value="Trigger_fac_C"/>
</dbReference>
<dbReference type="InterPro" id="IPR037041">
    <property type="entry name" value="Trigger_fac_C_sf"/>
</dbReference>
<dbReference type="InterPro" id="IPR008881">
    <property type="entry name" value="Trigger_fac_ribosome-bd_bac"/>
</dbReference>
<dbReference type="InterPro" id="IPR036611">
    <property type="entry name" value="Trigger_fac_ribosome-bd_sf"/>
</dbReference>
<dbReference type="InterPro" id="IPR027304">
    <property type="entry name" value="Trigger_fact/SurA_dom_sf"/>
</dbReference>
<dbReference type="NCBIfam" id="TIGR00115">
    <property type="entry name" value="tig"/>
    <property type="match status" value="1"/>
</dbReference>
<dbReference type="PANTHER" id="PTHR30560">
    <property type="entry name" value="TRIGGER FACTOR CHAPERONE AND PEPTIDYL-PROLYL CIS/TRANS ISOMERASE"/>
    <property type="match status" value="1"/>
</dbReference>
<dbReference type="PANTHER" id="PTHR30560:SF3">
    <property type="entry name" value="TRIGGER FACTOR-LIKE PROTEIN TIG, CHLOROPLASTIC"/>
    <property type="match status" value="1"/>
</dbReference>
<dbReference type="Pfam" id="PF00254">
    <property type="entry name" value="FKBP_C"/>
    <property type="match status" value="1"/>
</dbReference>
<dbReference type="Pfam" id="PF05698">
    <property type="entry name" value="Trigger_C"/>
    <property type="match status" value="1"/>
</dbReference>
<dbReference type="Pfam" id="PF05697">
    <property type="entry name" value="Trigger_N"/>
    <property type="match status" value="1"/>
</dbReference>
<dbReference type="PIRSF" id="PIRSF003095">
    <property type="entry name" value="Trigger_factor"/>
    <property type="match status" value="1"/>
</dbReference>
<dbReference type="SUPFAM" id="SSF54534">
    <property type="entry name" value="FKBP-like"/>
    <property type="match status" value="1"/>
</dbReference>
<dbReference type="SUPFAM" id="SSF109998">
    <property type="entry name" value="Triger factor/SurA peptide-binding domain-like"/>
    <property type="match status" value="1"/>
</dbReference>
<dbReference type="SUPFAM" id="SSF102735">
    <property type="entry name" value="Trigger factor ribosome-binding domain"/>
    <property type="match status" value="1"/>
</dbReference>
<dbReference type="PROSITE" id="PS50059">
    <property type="entry name" value="FKBP_PPIASE"/>
    <property type="match status" value="1"/>
</dbReference>
<accession>A9C1U7</accession>
<protein>
    <recommendedName>
        <fullName evidence="1">Trigger factor</fullName>
        <shortName evidence="1">TF</shortName>
        <ecNumber evidence="1">5.2.1.8</ecNumber>
    </recommendedName>
    <alternativeName>
        <fullName evidence="1">PPIase</fullName>
    </alternativeName>
</protein>
<organism>
    <name type="scientific">Delftia acidovorans (strain DSM 14801 / SPH-1)</name>
    <dbReference type="NCBI Taxonomy" id="398578"/>
    <lineage>
        <taxon>Bacteria</taxon>
        <taxon>Pseudomonadati</taxon>
        <taxon>Pseudomonadota</taxon>
        <taxon>Betaproteobacteria</taxon>
        <taxon>Burkholderiales</taxon>
        <taxon>Comamonadaceae</taxon>
        <taxon>Delftia</taxon>
    </lineage>
</organism>